<protein>
    <recommendedName>
        <fullName evidence="1">Ribosome maturation factor RimM</fullName>
    </recommendedName>
</protein>
<keyword id="KW-0143">Chaperone</keyword>
<keyword id="KW-0963">Cytoplasm</keyword>
<keyword id="KW-0690">Ribosome biogenesis</keyword>
<keyword id="KW-0698">rRNA processing</keyword>
<evidence type="ECO:0000255" key="1">
    <source>
        <dbReference type="HAMAP-Rule" id="MF_00014"/>
    </source>
</evidence>
<feature type="chain" id="PRO_0000163331" description="Ribosome maturation factor RimM">
    <location>
        <begin position="1"/>
        <end position="179"/>
    </location>
</feature>
<feature type="domain" description="PRC barrel" evidence="1">
    <location>
        <begin position="98"/>
        <end position="170"/>
    </location>
</feature>
<reference key="1">
    <citation type="journal article" date="2004" name="Science">
        <title>The complete genome sequence of Propionibacterium acnes, a commensal of human skin.</title>
        <authorList>
            <person name="Brueggemann H."/>
            <person name="Henne A."/>
            <person name="Hoster F."/>
            <person name="Liesegang H."/>
            <person name="Wiezer A."/>
            <person name="Strittmatter A."/>
            <person name="Hujer S."/>
            <person name="Duerre P."/>
            <person name="Gottschalk G."/>
        </authorList>
    </citation>
    <scope>NUCLEOTIDE SEQUENCE [LARGE SCALE GENOMIC DNA]</scope>
    <source>
        <strain>DSM 16379 / KPA171202</strain>
    </source>
</reference>
<comment type="function">
    <text evidence="1">An accessory protein needed during the final step in the assembly of 30S ribosomal subunit, possibly for assembly of the head region. Essential for efficient processing of 16S rRNA. May be needed both before and after RbfA during the maturation of 16S rRNA. It has affinity for free ribosomal 30S subunits but not for 70S ribosomes.</text>
</comment>
<comment type="subunit">
    <text evidence="1">Binds ribosomal protein uS19.</text>
</comment>
<comment type="subcellular location">
    <subcellularLocation>
        <location evidence="1">Cytoplasm</location>
    </subcellularLocation>
</comment>
<comment type="domain">
    <text evidence="1">The PRC barrel domain binds ribosomal protein uS19.</text>
</comment>
<comment type="similarity">
    <text evidence="1">Belongs to the RimM family.</text>
</comment>
<dbReference type="EMBL" id="AE017283">
    <property type="protein sequence ID" value="AAT83189.1"/>
    <property type="molecule type" value="Genomic_DNA"/>
</dbReference>
<dbReference type="RefSeq" id="WP_002516104.1">
    <property type="nucleotide sequence ID" value="NZ_CP025935.1"/>
</dbReference>
<dbReference type="SMR" id="Q6A7S6"/>
<dbReference type="EnsemblBacteria" id="AAT83189">
    <property type="protein sequence ID" value="AAT83189"/>
    <property type="gene ID" value="PPA1441"/>
</dbReference>
<dbReference type="GeneID" id="92857416"/>
<dbReference type="KEGG" id="pac:PPA1441"/>
<dbReference type="eggNOG" id="COG0806">
    <property type="taxonomic scope" value="Bacteria"/>
</dbReference>
<dbReference type="HOGENOM" id="CLU_077636_0_0_11"/>
<dbReference type="Proteomes" id="UP000000603">
    <property type="component" value="Chromosome"/>
</dbReference>
<dbReference type="GO" id="GO:0005737">
    <property type="term" value="C:cytoplasm"/>
    <property type="evidence" value="ECO:0007669"/>
    <property type="project" value="UniProtKB-SubCell"/>
</dbReference>
<dbReference type="GO" id="GO:0005840">
    <property type="term" value="C:ribosome"/>
    <property type="evidence" value="ECO:0007669"/>
    <property type="project" value="InterPro"/>
</dbReference>
<dbReference type="GO" id="GO:0043022">
    <property type="term" value="F:ribosome binding"/>
    <property type="evidence" value="ECO:0007669"/>
    <property type="project" value="InterPro"/>
</dbReference>
<dbReference type="GO" id="GO:0042274">
    <property type="term" value="P:ribosomal small subunit biogenesis"/>
    <property type="evidence" value="ECO:0007669"/>
    <property type="project" value="UniProtKB-UniRule"/>
</dbReference>
<dbReference type="GO" id="GO:0006364">
    <property type="term" value="P:rRNA processing"/>
    <property type="evidence" value="ECO:0007669"/>
    <property type="project" value="UniProtKB-UniRule"/>
</dbReference>
<dbReference type="Gene3D" id="2.30.30.240">
    <property type="entry name" value="PRC-barrel domain"/>
    <property type="match status" value="1"/>
</dbReference>
<dbReference type="Gene3D" id="2.40.30.60">
    <property type="entry name" value="RimM"/>
    <property type="match status" value="1"/>
</dbReference>
<dbReference type="HAMAP" id="MF_00014">
    <property type="entry name" value="Ribosome_mat_RimM"/>
    <property type="match status" value="1"/>
</dbReference>
<dbReference type="InterPro" id="IPR011033">
    <property type="entry name" value="PRC_barrel-like_sf"/>
</dbReference>
<dbReference type="InterPro" id="IPR056792">
    <property type="entry name" value="PRC_RimM"/>
</dbReference>
<dbReference type="InterPro" id="IPR011961">
    <property type="entry name" value="RimM"/>
</dbReference>
<dbReference type="InterPro" id="IPR002676">
    <property type="entry name" value="RimM_N"/>
</dbReference>
<dbReference type="InterPro" id="IPR036976">
    <property type="entry name" value="RimM_N_sf"/>
</dbReference>
<dbReference type="InterPro" id="IPR009000">
    <property type="entry name" value="Transl_B-barrel_sf"/>
</dbReference>
<dbReference type="NCBIfam" id="TIGR02273">
    <property type="entry name" value="16S_RimM"/>
    <property type="match status" value="1"/>
</dbReference>
<dbReference type="PANTHER" id="PTHR33692">
    <property type="entry name" value="RIBOSOME MATURATION FACTOR RIMM"/>
    <property type="match status" value="1"/>
</dbReference>
<dbReference type="PANTHER" id="PTHR33692:SF1">
    <property type="entry name" value="RIBOSOME MATURATION FACTOR RIMM"/>
    <property type="match status" value="1"/>
</dbReference>
<dbReference type="Pfam" id="PF24986">
    <property type="entry name" value="PRC_RimM"/>
    <property type="match status" value="1"/>
</dbReference>
<dbReference type="Pfam" id="PF01782">
    <property type="entry name" value="RimM"/>
    <property type="match status" value="1"/>
</dbReference>
<dbReference type="SUPFAM" id="SSF50346">
    <property type="entry name" value="PRC-barrel domain"/>
    <property type="match status" value="1"/>
</dbReference>
<dbReference type="SUPFAM" id="SSF50447">
    <property type="entry name" value="Translation proteins"/>
    <property type="match status" value="1"/>
</dbReference>
<accession>Q6A7S6</accession>
<sequence>MEESATVEVVVGRVGRAHGLRGDVVVEVRTDEPDARFGVGATVQIEGSRRDLTVVRSRWAKGCLIVAFDEVKDRQGAEELRGSVLVVDVEPNDDPDDPDEFWDRRLRGLTVVDESGKSRGAVKDVLHMPAQDVLVIDVSGEEHLVPFVHQLVPTVDVASGRIVVSGIPGLLDSNAEEAR</sequence>
<proteinExistence type="inferred from homology"/>
<name>RIMM_CUTAK</name>
<organism>
    <name type="scientific">Cutibacterium acnes (strain DSM 16379 / KPA171202)</name>
    <name type="common">Propionibacterium acnes</name>
    <dbReference type="NCBI Taxonomy" id="267747"/>
    <lineage>
        <taxon>Bacteria</taxon>
        <taxon>Bacillati</taxon>
        <taxon>Actinomycetota</taxon>
        <taxon>Actinomycetes</taxon>
        <taxon>Propionibacteriales</taxon>
        <taxon>Propionibacteriaceae</taxon>
        <taxon>Cutibacterium</taxon>
    </lineage>
</organism>
<gene>
    <name evidence="1" type="primary">rimM</name>
    <name type="ordered locus">PPA1441</name>
</gene>